<accession>Q8G7C3</accession>
<keyword id="KW-0963">Cytoplasm</keyword>
<keyword id="KW-0444">Lipid biosynthesis</keyword>
<keyword id="KW-0443">Lipid metabolism</keyword>
<keyword id="KW-0520">NAD</keyword>
<keyword id="KW-0521">NADP</keyword>
<keyword id="KW-0547">Nucleotide-binding</keyword>
<keyword id="KW-0560">Oxidoreductase</keyword>
<keyword id="KW-0594">Phospholipid biosynthesis</keyword>
<keyword id="KW-1208">Phospholipid metabolism</keyword>
<keyword id="KW-1185">Reference proteome</keyword>
<gene>
    <name evidence="1" type="primary">gpsA</name>
    <name type="ordered locus">BL0346</name>
</gene>
<organism>
    <name type="scientific">Bifidobacterium longum (strain NCC 2705)</name>
    <dbReference type="NCBI Taxonomy" id="206672"/>
    <lineage>
        <taxon>Bacteria</taxon>
        <taxon>Bacillati</taxon>
        <taxon>Actinomycetota</taxon>
        <taxon>Actinomycetes</taxon>
        <taxon>Bifidobacteriales</taxon>
        <taxon>Bifidobacteriaceae</taxon>
        <taxon>Bifidobacterium</taxon>
    </lineage>
</organism>
<protein>
    <recommendedName>
        <fullName evidence="1">Glycerol-3-phosphate dehydrogenase [NAD(P)+]</fullName>
        <ecNumber evidence="1">1.1.1.94</ecNumber>
    </recommendedName>
    <alternativeName>
        <fullName evidence="1">NAD(P)(+)-dependent glycerol-3-phosphate dehydrogenase</fullName>
    </alternativeName>
    <alternativeName>
        <fullName evidence="1">NAD(P)H-dependent dihydroxyacetone-phosphate reductase</fullName>
    </alternativeName>
</protein>
<name>GPDA_BIFLO</name>
<evidence type="ECO:0000255" key="1">
    <source>
        <dbReference type="HAMAP-Rule" id="MF_00394"/>
    </source>
</evidence>
<comment type="function">
    <text evidence="1">Catalyzes the reduction of the glycolytic intermediate dihydroxyacetone phosphate (DHAP) to sn-glycerol 3-phosphate (G3P), the key precursor for phospholipid synthesis.</text>
</comment>
<comment type="catalytic activity">
    <reaction evidence="1">
        <text>sn-glycerol 3-phosphate + NAD(+) = dihydroxyacetone phosphate + NADH + H(+)</text>
        <dbReference type="Rhea" id="RHEA:11092"/>
        <dbReference type="ChEBI" id="CHEBI:15378"/>
        <dbReference type="ChEBI" id="CHEBI:57540"/>
        <dbReference type="ChEBI" id="CHEBI:57597"/>
        <dbReference type="ChEBI" id="CHEBI:57642"/>
        <dbReference type="ChEBI" id="CHEBI:57945"/>
        <dbReference type="EC" id="1.1.1.94"/>
    </reaction>
    <physiologicalReaction direction="right-to-left" evidence="1">
        <dbReference type="Rhea" id="RHEA:11094"/>
    </physiologicalReaction>
</comment>
<comment type="catalytic activity">
    <reaction evidence="1">
        <text>sn-glycerol 3-phosphate + NADP(+) = dihydroxyacetone phosphate + NADPH + H(+)</text>
        <dbReference type="Rhea" id="RHEA:11096"/>
        <dbReference type="ChEBI" id="CHEBI:15378"/>
        <dbReference type="ChEBI" id="CHEBI:57597"/>
        <dbReference type="ChEBI" id="CHEBI:57642"/>
        <dbReference type="ChEBI" id="CHEBI:57783"/>
        <dbReference type="ChEBI" id="CHEBI:58349"/>
        <dbReference type="EC" id="1.1.1.94"/>
    </reaction>
    <physiologicalReaction direction="right-to-left" evidence="1">
        <dbReference type="Rhea" id="RHEA:11098"/>
    </physiologicalReaction>
</comment>
<comment type="pathway">
    <text evidence="1">Membrane lipid metabolism; glycerophospholipid metabolism.</text>
</comment>
<comment type="subcellular location">
    <subcellularLocation>
        <location evidence="1">Cytoplasm</location>
    </subcellularLocation>
</comment>
<comment type="similarity">
    <text evidence="1">Belongs to the NAD-dependent glycerol-3-phosphate dehydrogenase family.</text>
</comment>
<reference key="1">
    <citation type="journal article" date="2002" name="Proc. Natl. Acad. Sci. U.S.A.">
        <title>The genome sequence of Bifidobacterium longum reflects its adaptation to the human gastrointestinal tract.</title>
        <authorList>
            <person name="Schell M.A."/>
            <person name="Karmirantzou M."/>
            <person name="Snel B."/>
            <person name="Vilanova D."/>
            <person name="Berger B."/>
            <person name="Pessi G."/>
            <person name="Zwahlen M.-C."/>
            <person name="Desiere F."/>
            <person name="Bork P."/>
            <person name="Delley M."/>
            <person name="Pridmore R.D."/>
            <person name="Arigoni F."/>
        </authorList>
    </citation>
    <scope>NUCLEOTIDE SEQUENCE [LARGE SCALE GENOMIC DNA]</scope>
    <source>
        <strain>NCC 2705</strain>
    </source>
</reference>
<sequence length="333" mass="34616">MGKNITVLGAGAWGTAFGQVLADAGNTVTMWAKEQQIVEGIRDHHHNAVRLPSVEKLPDNMTATGDRAEAVKNADIVVVAIAAQFARVALVEFKGLIPDHAIVVSLMKGIERGTNKRMDEVVRESLDLPADRFAAISGPNLSKEIADRHPAATVVACTNLDNATKVAEACTTSYFKPFVTTDVIGLEMCGSLKNVTALAVGMARGAGYGENTAAMIETRGLAELTALGVAAGADPKTFFGLAGVGDLIATCGSSLSRNYTFGANLGKGLTVEEATKVSNGVAEGVPTTDAVVALGDQLDVPTPLAYQMSRVLNEGISCSEMLAGLFGHEVTGE</sequence>
<dbReference type="EC" id="1.1.1.94" evidence="1"/>
<dbReference type="EMBL" id="AE014295">
    <property type="protein sequence ID" value="AAN24185.1"/>
    <property type="molecule type" value="Genomic_DNA"/>
</dbReference>
<dbReference type="RefSeq" id="NP_695549.1">
    <property type="nucleotide sequence ID" value="NC_004307.2"/>
</dbReference>
<dbReference type="RefSeq" id="WP_007051468.1">
    <property type="nucleotide sequence ID" value="NC_004307.2"/>
</dbReference>
<dbReference type="SMR" id="Q8G7C3"/>
<dbReference type="STRING" id="206672.BL0346"/>
<dbReference type="EnsemblBacteria" id="AAN24185">
    <property type="protein sequence ID" value="AAN24185"/>
    <property type="gene ID" value="BL0346"/>
</dbReference>
<dbReference type="KEGG" id="blo:BL0346"/>
<dbReference type="PATRIC" id="fig|206672.9.peg.1083"/>
<dbReference type="HOGENOM" id="CLU_033449_0_2_11"/>
<dbReference type="OrthoDB" id="9812273at2"/>
<dbReference type="PhylomeDB" id="Q8G7C3"/>
<dbReference type="UniPathway" id="UPA00940"/>
<dbReference type="Proteomes" id="UP000000439">
    <property type="component" value="Chromosome"/>
</dbReference>
<dbReference type="GO" id="GO:0005829">
    <property type="term" value="C:cytosol"/>
    <property type="evidence" value="ECO:0007669"/>
    <property type="project" value="TreeGrafter"/>
</dbReference>
<dbReference type="GO" id="GO:0047952">
    <property type="term" value="F:glycerol-3-phosphate dehydrogenase [NAD(P)+] activity"/>
    <property type="evidence" value="ECO:0007669"/>
    <property type="project" value="UniProtKB-UniRule"/>
</dbReference>
<dbReference type="GO" id="GO:0051287">
    <property type="term" value="F:NAD binding"/>
    <property type="evidence" value="ECO:0007669"/>
    <property type="project" value="InterPro"/>
</dbReference>
<dbReference type="GO" id="GO:0005975">
    <property type="term" value="P:carbohydrate metabolic process"/>
    <property type="evidence" value="ECO:0007669"/>
    <property type="project" value="InterPro"/>
</dbReference>
<dbReference type="GO" id="GO:0046167">
    <property type="term" value="P:glycerol-3-phosphate biosynthetic process"/>
    <property type="evidence" value="ECO:0007669"/>
    <property type="project" value="UniProtKB-UniRule"/>
</dbReference>
<dbReference type="GO" id="GO:0046168">
    <property type="term" value="P:glycerol-3-phosphate catabolic process"/>
    <property type="evidence" value="ECO:0007669"/>
    <property type="project" value="InterPro"/>
</dbReference>
<dbReference type="GO" id="GO:0006650">
    <property type="term" value="P:glycerophospholipid metabolic process"/>
    <property type="evidence" value="ECO:0007669"/>
    <property type="project" value="UniProtKB-UniRule"/>
</dbReference>
<dbReference type="GO" id="GO:0008654">
    <property type="term" value="P:phospholipid biosynthetic process"/>
    <property type="evidence" value="ECO:0007669"/>
    <property type="project" value="UniProtKB-KW"/>
</dbReference>
<dbReference type="FunFam" id="3.40.50.720:FF:000019">
    <property type="entry name" value="Glycerol-3-phosphate dehydrogenase [NAD(P)+]"/>
    <property type="match status" value="1"/>
</dbReference>
<dbReference type="Gene3D" id="1.10.1040.10">
    <property type="entry name" value="N-(1-d-carboxylethyl)-l-norvaline Dehydrogenase, domain 2"/>
    <property type="match status" value="1"/>
</dbReference>
<dbReference type="Gene3D" id="3.40.50.720">
    <property type="entry name" value="NAD(P)-binding Rossmann-like Domain"/>
    <property type="match status" value="1"/>
</dbReference>
<dbReference type="HAMAP" id="MF_00394">
    <property type="entry name" value="NAD_Glyc3P_dehydrog"/>
    <property type="match status" value="1"/>
</dbReference>
<dbReference type="InterPro" id="IPR008927">
    <property type="entry name" value="6-PGluconate_DH-like_C_sf"/>
</dbReference>
<dbReference type="InterPro" id="IPR013328">
    <property type="entry name" value="6PGD_dom2"/>
</dbReference>
<dbReference type="InterPro" id="IPR006168">
    <property type="entry name" value="G3P_DH_NAD-dep"/>
</dbReference>
<dbReference type="InterPro" id="IPR006109">
    <property type="entry name" value="G3P_DH_NAD-dep_C"/>
</dbReference>
<dbReference type="InterPro" id="IPR011128">
    <property type="entry name" value="G3P_DH_NAD-dep_N"/>
</dbReference>
<dbReference type="InterPro" id="IPR036291">
    <property type="entry name" value="NAD(P)-bd_dom_sf"/>
</dbReference>
<dbReference type="NCBIfam" id="NF000940">
    <property type="entry name" value="PRK00094.1-2"/>
    <property type="match status" value="1"/>
</dbReference>
<dbReference type="NCBIfam" id="NF000942">
    <property type="entry name" value="PRK00094.1-4"/>
    <property type="match status" value="1"/>
</dbReference>
<dbReference type="PANTHER" id="PTHR11728">
    <property type="entry name" value="GLYCEROL-3-PHOSPHATE DEHYDROGENASE"/>
    <property type="match status" value="1"/>
</dbReference>
<dbReference type="PANTHER" id="PTHR11728:SF1">
    <property type="entry name" value="GLYCEROL-3-PHOSPHATE DEHYDROGENASE [NAD(+)] 2, CHLOROPLASTIC"/>
    <property type="match status" value="1"/>
</dbReference>
<dbReference type="Pfam" id="PF07479">
    <property type="entry name" value="NAD_Gly3P_dh_C"/>
    <property type="match status" value="1"/>
</dbReference>
<dbReference type="Pfam" id="PF01210">
    <property type="entry name" value="NAD_Gly3P_dh_N"/>
    <property type="match status" value="1"/>
</dbReference>
<dbReference type="PIRSF" id="PIRSF000114">
    <property type="entry name" value="Glycerol-3-P_dh"/>
    <property type="match status" value="1"/>
</dbReference>
<dbReference type="PRINTS" id="PR00077">
    <property type="entry name" value="GPDHDRGNASE"/>
</dbReference>
<dbReference type="SUPFAM" id="SSF48179">
    <property type="entry name" value="6-phosphogluconate dehydrogenase C-terminal domain-like"/>
    <property type="match status" value="1"/>
</dbReference>
<dbReference type="SUPFAM" id="SSF51735">
    <property type="entry name" value="NAD(P)-binding Rossmann-fold domains"/>
    <property type="match status" value="1"/>
</dbReference>
<dbReference type="PROSITE" id="PS00957">
    <property type="entry name" value="NAD_G3PDH"/>
    <property type="match status" value="1"/>
</dbReference>
<feature type="chain" id="PRO_0000137929" description="Glycerol-3-phosphate dehydrogenase [NAD(P)+]">
    <location>
        <begin position="1"/>
        <end position="333"/>
    </location>
</feature>
<feature type="active site" description="Proton acceptor" evidence="1">
    <location>
        <position position="193"/>
    </location>
</feature>
<feature type="binding site" evidence="1">
    <location>
        <position position="13"/>
    </location>
    <ligand>
        <name>NADPH</name>
        <dbReference type="ChEBI" id="CHEBI:57783"/>
    </ligand>
</feature>
<feature type="binding site" evidence="1">
    <location>
        <position position="33"/>
    </location>
    <ligand>
        <name>NADPH</name>
        <dbReference type="ChEBI" id="CHEBI:57783"/>
    </ligand>
</feature>
<feature type="binding site" evidence="1">
    <location>
        <position position="108"/>
    </location>
    <ligand>
        <name>NADPH</name>
        <dbReference type="ChEBI" id="CHEBI:57783"/>
    </ligand>
</feature>
<feature type="binding site" evidence="1">
    <location>
        <position position="108"/>
    </location>
    <ligand>
        <name>sn-glycerol 3-phosphate</name>
        <dbReference type="ChEBI" id="CHEBI:57597"/>
    </ligand>
</feature>
<feature type="binding site" evidence="1">
    <location>
        <position position="138"/>
    </location>
    <ligand>
        <name>sn-glycerol 3-phosphate</name>
        <dbReference type="ChEBI" id="CHEBI:57597"/>
    </ligand>
</feature>
<feature type="binding site" evidence="1">
    <location>
        <position position="142"/>
    </location>
    <ligand>
        <name>NADPH</name>
        <dbReference type="ChEBI" id="CHEBI:57783"/>
    </ligand>
</feature>
<feature type="binding site" evidence="1">
    <location>
        <position position="193"/>
    </location>
    <ligand>
        <name>sn-glycerol 3-phosphate</name>
        <dbReference type="ChEBI" id="CHEBI:57597"/>
    </ligand>
</feature>
<feature type="binding site" evidence="1">
    <location>
        <position position="246"/>
    </location>
    <ligand>
        <name>sn-glycerol 3-phosphate</name>
        <dbReference type="ChEBI" id="CHEBI:57597"/>
    </ligand>
</feature>
<feature type="binding site" evidence="1">
    <location>
        <position position="256"/>
    </location>
    <ligand>
        <name>sn-glycerol 3-phosphate</name>
        <dbReference type="ChEBI" id="CHEBI:57597"/>
    </ligand>
</feature>
<feature type="binding site" evidence="1">
    <location>
        <position position="257"/>
    </location>
    <ligand>
        <name>NADPH</name>
        <dbReference type="ChEBI" id="CHEBI:57783"/>
    </ligand>
</feature>
<feature type="binding site" evidence="1">
    <location>
        <position position="257"/>
    </location>
    <ligand>
        <name>sn-glycerol 3-phosphate</name>
        <dbReference type="ChEBI" id="CHEBI:57597"/>
    </ligand>
</feature>
<feature type="binding site" evidence="1">
    <location>
        <position position="258"/>
    </location>
    <ligand>
        <name>sn-glycerol 3-phosphate</name>
        <dbReference type="ChEBI" id="CHEBI:57597"/>
    </ligand>
</feature>
<feature type="binding site" evidence="1">
    <location>
        <position position="281"/>
    </location>
    <ligand>
        <name>NADPH</name>
        <dbReference type="ChEBI" id="CHEBI:57783"/>
    </ligand>
</feature>
<feature type="binding site" evidence="1">
    <location>
        <position position="283"/>
    </location>
    <ligand>
        <name>NADPH</name>
        <dbReference type="ChEBI" id="CHEBI:57783"/>
    </ligand>
</feature>
<proteinExistence type="inferred from homology"/>